<feature type="signal peptide" evidence="6">
    <location>
        <begin position="1"/>
        <end position="19"/>
    </location>
</feature>
<feature type="chain" id="PRO_0000004153" description="Calumenin">
    <location>
        <begin position="20"/>
        <end position="315"/>
    </location>
</feature>
<feature type="domain" description="EF-hand 1" evidence="3">
    <location>
        <begin position="68"/>
        <end position="103"/>
    </location>
</feature>
<feature type="domain" description="EF-hand 2" evidence="3">
    <location>
        <begin position="104"/>
        <end position="139"/>
    </location>
</feature>
<feature type="domain" description="EF-hand 3" evidence="3">
    <location>
        <begin position="151"/>
        <end position="186"/>
    </location>
</feature>
<feature type="domain" description="EF-hand 4" evidence="3">
    <location>
        <begin position="188"/>
        <end position="223"/>
    </location>
</feature>
<feature type="domain" description="EF-hand 5" evidence="3">
    <location>
        <begin position="229"/>
        <end position="264"/>
    </location>
</feature>
<feature type="domain" description="EF-hand 6" evidence="3">
    <location>
        <begin position="265"/>
        <end position="300"/>
    </location>
</feature>
<feature type="short sequence motif" description="Prevents secretion from ER" evidence="1">
    <location>
        <begin position="312"/>
        <end position="315"/>
    </location>
</feature>
<feature type="binding site" evidence="3">
    <location>
        <position position="81"/>
    </location>
    <ligand>
        <name>Ca(2+)</name>
        <dbReference type="ChEBI" id="CHEBI:29108"/>
        <label>1</label>
    </ligand>
</feature>
<feature type="binding site" evidence="3">
    <location>
        <position position="83"/>
    </location>
    <ligand>
        <name>Ca(2+)</name>
        <dbReference type="ChEBI" id="CHEBI:29108"/>
        <label>1</label>
    </ligand>
</feature>
<feature type="binding site" evidence="3">
    <location>
        <position position="85"/>
    </location>
    <ligand>
        <name>Ca(2+)</name>
        <dbReference type="ChEBI" id="CHEBI:29108"/>
        <label>1</label>
    </ligand>
</feature>
<feature type="binding site" evidence="3">
    <location>
        <position position="92"/>
    </location>
    <ligand>
        <name>Ca(2+)</name>
        <dbReference type="ChEBI" id="CHEBI:29108"/>
        <label>1</label>
    </ligand>
</feature>
<feature type="binding site" evidence="3">
    <location>
        <position position="117"/>
    </location>
    <ligand>
        <name>Ca(2+)</name>
        <dbReference type="ChEBI" id="CHEBI:29108"/>
        <label>2</label>
    </ligand>
</feature>
<feature type="binding site" evidence="3">
    <location>
        <position position="119"/>
    </location>
    <ligand>
        <name>Ca(2+)</name>
        <dbReference type="ChEBI" id="CHEBI:29108"/>
        <label>2</label>
    </ligand>
</feature>
<feature type="binding site" evidence="3">
    <location>
        <position position="121"/>
    </location>
    <ligand>
        <name>Ca(2+)</name>
        <dbReference type="ChEBI" id="CHEBI:29108"/>
        <label>2</label>
    </ligand>
</feature>
<feature type="binding site" evidence="3">
    <location>
        <position position="128"/>
    </location>
    <ligand>
        <name>Ca(2+)</name>
        <dbReference type="ChEBI" id="CHEBI:29108"/>
        <label>2</label>
    </ligand>
</feature>
<feature type="binding site" evidence="15">
    <location>
        <position position="164"/>
    </location>
    <ligand>
        <name>Ca(2+)</name>
        <dbReference type="ChEBI" id="CHEBI:29108"/>
        <label>3</label>
    </ligand>
</feature>
<feature type="binding site" evidence="15">
    <location>
        <position position="166"/>
    </location>
    <ligand>
        <name>Ca(2+)</name>
        <dbReference type="ChEBI" id="CHEBI:29108"/>
        <label>3</label>
    </ligand>
</feature>
<feature type="binding site" evidence="15">
    <location>
        <position position="168"/>
    </location>
    <ligand>
        <name>Ca(2+)</name>
        <dbReference type="ChEBI" id="CHEBI:29108"/>
        <label>3</label>
    </ligand>
</feature>
<feature type="binding site" evidence="15">
    <location>
        <position position="175"/>
    </location>
    <ligand>
        <name>Ca(2+)</name>
        <dbReference type="ChEBI" id="CHEBI:29108"/>
        <label>3</label>
    </ligand>
</feature>
<feature type="binding site" evidence="3">
    <location>
        <position position="201"/>
    </location>
    <ligand>
        <name>Ca(2+)</name>
        <dbReference type="ChEBI" id="CHEBI:29108"/>
        <label>4</label>
    </ligand>
</feature>
<feature type="binding site" evidence="3">
    <location>
        <position position="203"/>
    </location>
    <ligand>
        <name>Ca(2+)</name>
        <dbReference type="ChEBI" id="CHEBI:29108"/>
        <label>4</label>
    </ligand>
</feature>
<feature type="binding site" evidence="3">
    <location>
        <position position="205"/>
    </location>
    <ligand>
        <name>Ca(2+)</name>
        <dbReference type="ChEBI" id="CHEBI:29108"/>
        <label>4</label>
    </ligand>
</feature>
<feature type="binding site" evidence="3">
    <location>
        <position position="212"/>
    </location>
    <ligand>
        <name>Ca(2+)</name>
        <dbReference type="ChEBI" id="CHEBI:29108"/>
        <label>4</label>
    </ligand>
</feature>
<feature type="binding site" evidence="15">
    <location>
        <position position="242"/>
    </location>
    <ligand>
        <name>Ca(2+)</name>
        <dbReference type="ChEBI" id="CHEBI:29108"/>
        <label>5</label>
    </ligand>
</feature>
<feature type="binding site" evidence="15">
    <location>
        <position position="244"/>
    </location>
    <ligand>
        <name>Ca(2+)</name>
        <dbReference type="ChEBI" id="CHEBI:29108"/>
        <label>5</label>
    </ligand>
</feature>
<feature type="binding site" evidence="15">
    <location>
        <position position="246"/>
    </location>
    <ligand>
        <name>Ca(2+)</name>
        <dbReference type="ChEBI" id="CHEBI:29108"/>
        <label>5</label>
    </ligand>
</feature>
<feature type="binding site" evidence="15">
    <location>
        <position position="248"/>
    </location>
    <ligand>
        <name>Ca(2+)</name>
        <dbReference type="ChEBI" id="CHEBI:29108"/>
        <label>5</label>
    </ligand>
</feature>
<feature type="binding site" evidence="15">
    <location>
        <position position="253"/>
    </location>
    <ligand>
        <name>Ca(2+)</name>
        <dbReference type="ChEBI" id="CHEBI:29108"/>
        <label>5</label>
    </ligand>
</feature>
<feature type="binding site" evidence="3">
    <location>
        <position position="278"/>
    </location>
    <ligand>
        <name>Ca(2+)</name>
        <dbReference type="ChEBI" id="CHEBI:29108"/>
        <label>6</label>
    </ligand>
</feature>
<feature type="binding site" evidence="3">
    <location>
        <position position="280"/>
    </location>
    <ligand>
        <name>Ca(2+)</name>
        <dbReference type="ChEBI" id="CHEBI:29108"/>
        <label>6</label>
    </ligand>
</feature>
<feature type="binding site" evidence="3">
    <location>
        <position position="282"/>
    </location>
    <ligand>
        <name>Ca(2+)</name>
        <dbReference type="ChEBI" id="CHEBI:29108"/>
        <label>6</label>
    </ligand>
</feature>
<feature type="binding site" evidence="3">
    <location>
        <position position="284"/>
    </location>
    <ligand>
        <name>Ca(2+)</name>
        <dbReference type="ChEBI" id="CHEBI:29108"/>
        <label>6</label>
    </ligand>
</feature>
<feature type="binding site" evidence="3">
    <location>
        <position position="289"/>
    </location>
    <ligand>
        <name>Ca(2+)</name>
        <dbReference type="ChEBI" id="CHEBI:29108"/>
        <label>6</label>
    </ligand>
</feature>
<feature type="modified residue" description="Phosphoserine" evidence="17 18 19">
    <location>
        <position position="44"/>
    </location>
</feature>
<feature type="modified residue" description="Phosphotyrosine" evidence="19">
    <location>
        <position position="47"/>
    </location>
</feature>
<feature type="modified residue" description="Phosphothreonine" evidence="16 17 18 20">
    <location>
        <position position="65"/>
    </location>
</feature>
<feature type="modified residue" description="Phosphoserine; by FAM20C" evidence="9">
    <location>
        <position position="69"/>
    </location>
</feature>
<feature type="modified residue" description="N6-acetyllysine" evidence="2">
    <location>
        <position position="165"/>
    </location>
</feature>
<feature type="modified residue" description="Phosphothreonine" evidence="19">
    <location>
        <position position="254"/>
    </location>
</feature>
<feature type="modified residue" description="Phosphoserine" evidence="19">
    <location>
        <position position="261"/>
    </location>
</feature>
<feature type="modified residue" description="Phosphoserine" evidence="19">
    <location>
        <position position="277"/>
    </location>
</feature>
<feature type="glycosylation site" description="N-linked (GlcNAc...) (complex) asparagine" evidence="7 8">
    <location>
        <position position="131"/>
    </location>
</feature>
<feature type="splice variant" id="VSP_045939" description="In isoform 15." evidence="14">
    <location>
        <begin position="1"/>
        <end position="151"/>
    </location>
</feature>
<feature type="splice variant" id="VSP_043570" description="In isoform 3, isoform 4 and isoform 14." evidence="11 14">
    <original>M</original>
    <variation>MKETDLIIM</variation>
    <location>
        <position position="1"/>
    </location>
</feature>
<feature type="splice variant" id="VSP_045940" description="In isoform 12." evidence="14">
    <location>
        <begin position="75"/>
        <end position="315"/>
    </location>
</feature>
<feature type="splice variant" id="VSP_007317" description="In isoform 2, isoform 4, isoform 7 and isoform 8." evidence="12 13 14">
    <original>KIVSKIDGDKDGFVTVDELKDWIKFAQKRWIYEDVERQWKGHDLNEDGLVSWEEYKNATYGYV</original>
    <variation>MIVDKIDADKDGFVTEGELKSWIKHAQKKYIYDNVENQWQEFDMNQDGLISWDEYRNVTYGTY</variation>
    <location>
        <begin position="75"/>
        <end position="137"/>
    </location>
</feature>
<feature type="splice variant" id="VSP_045941" description="In isoform 9." evidence="14">
    <location>
        <begin position="94"/>
        <end position="254"/>
    </location>
</feature>
<feature type="splice variant" id="VSP_045942" description="In isoform 13 and isoform 14." evidence="14">
    <original>D</original>
    <variation>E</variation>
    <location>
        <position position="139"/>
    </location>
</feature>
<feature type="splice variant" id="VSP_045943" description="In isoform 13 and isoform 14." evidence="14">
    <location>
        <begin position="140"/>
        <end position="315"/>
    </location>
</feature>
<feature type="splice variant" id="VSP_045944" description="In isoform 7." evidence="14">
    <original>VRDERRFK</original>
    <variation>GILMSRNG</variation>
    <location>
        <begin position="154"/>
        <end position="161"/>
    </location>
</feature>
<feature type="splice variant" id="VSP_045945" description="In isoform 7." evidence="14">
    <location>
        <begin position="162"/>
        <end position="315"/>
    </location>
</feature>
<feature type="splice variant" id="VSP_045946" description="In isoform 5." evidence="14">
    <location>
        <begin position="164"/>
        <end position="249"/>
    </location>
</feature>
<feature type="splice variant" id="VSP_045947" description="In isoform 11." evidence="14">
    <original>KDGDLI</original>
    <variation>RARAVC</variation>
    <location>
        <begin position="165"/>
        <end position="170"/>
    </location>
</feature>
<feature type="splice variant" id="VSP_045948" description="In isoform 11." evidence="14">
    <location>
        <begin position="171"/>
        <end position="315"/>
    </location>
</feature>
<feature type="splice variant" id="VSP_045949" description="In isoform 8." evidence="14">
    <location>
        <begin position="172"/>
        <end position="285"/>
    </location>
</feature>
<feature type="splice variant" id="VSP_045950" description="In isoform 10." evidence="14">
    <original>DMYSHDGNTDEPEWVKTEREQFVEFRDKNRDGKMDKEETKDWILPSDYDHAEAEARHLVYESDQNKDGKLTKEEIVDKYDLFVGSQATDFGEALVRHDEF</original>
    <variation>WQAYQGGDR</variation>
    <location>
        <begin position="216"/>
        <end position="315"/>
    </location>
</feature>
<feature type="splice variant" id="VSP_045951" description="In isoform 6." evidence="14">
    <location>
        <begin position="226"/>
        <end position="275"/>
    </location>
</feature>
<feature type="sequence variant" id="VAR_022051" description="In dbSNP:rs2290228." evidence="10">
    <original>R</original>
    <variation>Q</variation>
    <location>
        <position position="4"/>
    </location>
</feature>
<feature type="sequence conflict" description="In Ref. 4; ADG45013." evidence="15" ref="4">
    <original>D</original>
    <variation>G</variation>
    <location>
        <position position="48"/>
    </location>
</feature>
<feature type="sequence conflict" description="In Ref. 4; ADG45007." evidence="15" ref="4">
    <original>K</original>
    <variation>R</variation>
    <location>
        <position position="84"/>
    </location>
</feature>
<feature type="sequence conflict" description="In Ref. 4; ADG45010." evidence="15" ref="4">
    <original>V</original>
    <variation>A</variation>
    <location>
        <position position="90"/>
    </location>
</feature>
<feature type="sequence conflict" description="In Ref. 4; ADG45007." evidence="15" ref="4">
    <original>D</original>
    <variation>G</variation>
    <location>
        <position position="117"/>
    </location>
</feature>
<feature type="sequence conflict" description="In Ref. 4; ADG45011." evidence="15" ref="4">
    <original>L</original>
    <variation>H</variation>
    <location>
        <position position="118"/>
    </location>
</feature>
<feature type="sequence conflict" description="In Ref. 4; ADG45012." evidence="15" ref="4">
    <original>F</original>
    <variation>S</variation>
    <location>
        <position position="147"/>
    </location>
</feature>
<feature type="sequence conflict" description="In Ref. 4; ADG45015." evidence="15" ref="4">
    <original>M</original>
    <variation>V</variation>
    <location>
        <position position="188"/>
    </location>
</feature>
<feature type="sequence conflict" description="In Ref. 1; AAB97725." evidence="15" ref="1">
    <original>F</original>
    <variation>L</variation>
    <location>
        <position position="207"/>
    </location>
</feature>
<feature type="sequence conflict" description="In Ref. 4; ADG45015." evidence="15" ref="4">
    <original>T</original>
    <variation>S</variation>
    <location>
        <position position="232"/>
    </location>
</feature>
<feature type="sequence conflict" description="In Ref. 6; CAG46634." evidence="15" ref="6">
    <original>E</original>
    <variation>V</variation>
    <location>
        <position position="267"/>
    </location>
</feature>
<organism>
    <name type="scientific">Homo sapiens</name>
    <name type="common">Human</name>
    <dbReference type="NCBI Taxonomy" id="9606"/>
    <lineage>
        <taxon>Eukaryota</taxon>
        <taxon>Metazoa</taxon>
        <taxon>Chordata</taxon>
        <taxon>Craniata</taxon>
        <taxon>Vertebrata</taxon>
        <taxon>Euteleostomi</taxon>
        <taxon>Mammalia</taxon>
        <taxon>Eutheria</taxon>
        <taxon>Euarchontoglires</taxon>
        <taxon>Primates</taxon>
        <taxon>Haplorrhini</taxon>
        <taxon>Catarrhini</taxon>
        <taxon>Hominidae</taxon>
        <taxon>Homo</taxon>
    </lineage>
</organism>
<protein>
    <recommendedName>
        <fullName>Calumenin</fullName>
    </recommendedName>
    <alternativeName>
        <fullName>Crocalbin</fullName>
    </alternativeName>
    <alternativeName>
        <fullName>IEF SSP 9302</fullName>
    </alternativeName>
</protein>
<keyword id="KW-0007">Acetylation</keyword>
<keyword id="KW-0025">Alternative splicing</keyword>
<keyword id="KW-0106">Calcium</keyword>
<keyword id="KW-0903">Direct protein sequencing</keyword>
<keyword id="KW-0256">Endoplasmic reticulum</keyword>
<keyword id="KW-0325">Glycoprotein</keyword>
<keyword id="KW-0333">Golgi apparatus</keyword>
<keyword id="KW-0472">Membrane</keyword>
<keyword id="KW-0479">Metal-binding</keyword>
<keyword id="KW-0597">Phosphoprotein</keyword>
<keyword id="KW-1267">Proteomics identification</keyword>
<keyword id="KW-1185">Reference proteome</keyword>
<keyword id="KW-0677">Repeat</keyword>
<keyword id="KW-0703">Sarcoplasmic reticulum</keyword>
<keyword id="KW-0964">Secreted</keyword>
<keyword id="KW-0732">Signal</keyword>
<proteinExistence type="evidence at protein level"/>
<evidence type="ECO:0000250" key="1"/>
<evidence type="ECO:0000250" key="2">
    <source>
        <dbReference type="UniProtKB" id="O35887"/>
    </source>
</evidence>
<evidence type="ECO:0000255" key="3">
    <source>
        <dbReference type="PROSITE-ProRule" id="PRU00448"/>
    </source>
</evidence>
<evidence type="ECO:0000269" key="4">
    <source>
    </source>
</evidence>
<evidence type="ECO:0000269" key="5">
    <source>
    </source>
</evidence>
<evidence type="ECO:0000269" key="6">
    <source>
    </source>
</evidence>
<evidence type="ECO:0000269" key="7">
    <source>
    </source>
</evidence>
<evidence type="ECO:0000269" key="8">
    <source>
    </source>
</evidence>
<evidence type="ECO:0000269" key="9">
    <source>
    </source>
</evidence>
<evidence type="ECO:0000269" key="10">
    <source ref="4"/>
</evidence>
<evidence type="ECO:0000303" key="11">
    <source>
    </source>
</evidence>
<evidence type="ECO:0000303" key="12">
    <source ref="10"/>
</evidence>
<evidence type="ECO:0000303" key="13">
    <source ref="3"/>
</evidence>
<evidence type="ECO:0000303" key="14">
    <source ref="4"/>
</evidence>
<evidence type="ECO:0000305" key="15"/>
<evidence type="ECO:0007744" key="16">
    <source>
    </source>
</evidence>
<evidence type="ECO:0007744" key="17">
    <source>
    </source>
</evidence>
<evidence type="ECO:0007744" key="18">
    <source>
    </source>
</evidence>
<evidence type="ECO:0007744" key="19">
    <source>
    </source>
</evidence>
<evidence type="ECO:0007744" key="20">
    <source>
    </source>
</evidence>
<name>CALU_HUMAN</name>
<accession>O43852</accession>
<accession>B3KPG9</accession>
<accession>D6QS48</accession>
<accession>D6QS49</accession>
<accession>D6QS50</accession>
<accession>D6QS51</accession>
<accession>D6QS52</accession>
<accession>D6QS53</accession>
<accession>D6QS54</accession>
<accession>D6QS55</accession>
<accession>D6QS56</accession>
<accession>D6QS57</accession>
<accession>D6QS58</accession>
<accession>D6QS59</accession>
<accession>F5H1Q9</accession>
<accession>F5H879</accession>
<accession>O60456</accession>
<accession>Q6FHB9</accession>
<accession>Q96RL3</accession>
<accession>Q9NR43</accession>
<sequence>MDLRQFLMCLSLCTAFALSKPTEKKDRVHHEPQLSDKVHNDAQSFDYDHDAFLGAEEAKTFDQLTPEESKERLGKIVSKIDGDKDGFVTVDELKDWIKFAQKRWIYEDVERQWKGHDLNEDGLVSWEEYKNATYGYVLDDPDPDDGFNYKQMMVRDERRFKMADKDGDLIATKEEFTAFLHPEEYDYMKDIVVQETMEDIDKNADGFIDLEEYIGDMYSHDGNTDEPEWVKTEREQFVEFRDKNRDGKMDKEETKDWILPSDYDHAEAEARHLVYESDQNKDGKLTKEEIVDKYDLFVGSQATDFGEALVRHDEF</sequence>
<comment type="function">
    <text evidence="1">Involved in regulation of vitamin K-dependent carboxylation of multiple N-terminal glutamate residues. Seems to inhibit gamma-carboxylase GGCX. Binds 7 calcium ions with a low affinity (By similarity).</text>
</comment>
<comment type="subunit">
    <text evidence="1">Interacts with GGCX.</text>
</comment>
<comment type="interaction">
    <interactant intactId="EBI-1171069">
        <id>O43852</id>
    </interactant>
    <interactant intactId="EBI-10173939">
        <id>Q9UMX0-2</id>
        <label>UBQLN1</label>
    </interactant>
    <organismsDiffer>false</organismsDiffer>
    <experiments>3</experiments>
</comment>
<comment type="interaction">
    <interactant intactId="EBI-1171069">
        <id>O43852</id>
    </interactant>
    <interactant intactId="EBI-25475847">
        <id>PRO_0000449619</id>
        <label>rep</label>
        <dbReference type="UniProtKB" id="P0DTD1"/>
    </interactant>
    <organismsDiffer>true</organismsDiffer>
    <experiments>2</experiments>
</comment>
<comment type="interaction">
    <interactant intactId="EBI-5280679">
        <id>O43852-1</id>
    </interactant>
    <interactant intactId="EBI-349854">
        <id>P13569</id>
        <label>CFTR</label>
    </interactant>
    <organismsDiffer>false</organismsDiffer>
    <experiments>2</experiments>
</comment>
<comment type="interaction">
    <interactant intactId="EBI-11536607">
        <id>O43852-3</id>
    </interactant>
    <interactant intactId="EBI-77613">
        <id>P05067</id>
        <label>APP</label>
    </interactant>
    <organismsDiffer>false</organismsDiffer>
    <experiments>3</experiments>
</comment>
<comment type="subcellular location">
    <subcellularLocation>
        <location evidence="4">Endoplasmic reticulum membrane</location>
    </subcellularLocation>
    <subcellularLocation>
        <location evidence="4">Golgi apparatus</location>
    </subcellularLocation>
    <subcellularLocation>
        <location evidence="15">Secreted</location>
    </subcellularLocation>
    <subcellularLocation>
        <location evidence="5">Melanosome</location>
    </subcellularLocation>
    <subcellularLocation>
        <location evidence="15">Sarcoplasmic reticulum lumen</location>
    </subcellularLocation>
    <text evidence="5">Identified by mass spectrometry in melanosome fractions from stage I to stage IV.</text>
</comment>
<comment type="alternative products">
    <event type="alternative splicing"/>
    <isoform>
        <id>O43852-1</id>
        <name>1</name>
        <sequence type="displayed"/>
    </isoform>
    <isoform>
        <id>O43852-2</id>
        <name>2</name>
        <name>Crocalbin</name>
        <sequence type="described" ref="VSP_007317"/>
    </isoform>
    <isoform>
        <id>O43852-3</id>
        <name>3</name>
        <sequence type="described" ref="VSP_043570"/>
    </isoform>
    <isoform>
        <id>O43852-4</id>
        <name>4</name>
        <sequence type="described" ref="VSP_043570 VSP_007317"/>
    </isoform>
    <isoform>
        <id>O43852-5</id>
        <name>5</name>
        <sequence type="described" ref="VSP_045946"/>
    </isoform>
    <isoform>
        <id>O43852-6</id>
        <name>6</name>
        <sequence type="described" ref="VSP_045951"/>
    </isoform>
    <isoform>
        <id>O43852-7</id>
        <name>7</name>
        <sequence type="described" ref="VSP_007317 VSP_045944 VSP_045945"/>
    </isoform>
    <isoform>
        <id>O43852-8</id>
        <name>8</name>
        <sequence type="described" ref="VSP_007317 VSP_045949"/>
    </isoform>
    <isoform>
        <id>O43852-9</id>
        <name>9</name>
        <sequence type="described" ref="VSP_045941"/>
    </isoform>
    <isoform>
        <id>O43852-10</id>
        <name>10</name>
        <sequence type="described" ref="VSP_045950"/>
    </isoform>
    <isoform>
        <id>O43852-11</id>
        <name>11</name>
        <sequence type="described" ref="VSP_045947 VSP_045948"/>
    </isoform>
    <isoform>
        <id>O43852-12</id>
        <name>12</name>
        <sequence type="described" ref="VSP_045940"/>
    </isoform>
    <isoform>
        <id>O43852-13</id>
        <name>13</name>
        <sequence type="described" ref="VSP_045942 VSP_045943"/>
    </isoform>
    <isoform>
        <id>O43852-14</id>
        <name>14</name>
        <sequence type="described" ref="VSP_043570 VSP_045942 VSP_045943"/>
    </isoform>
    <isoform>
        <id>O43852-15</id>
        <name>15</name>
        <sequence type="described" ref="VSP_045939"/>
    </isoform>
</comment>
<comment type="tissue specificity">
    <text>Ubiquitously expressed. Expressed at high levels in heart, placenta and skeletal muscle, at lower levels in lung, kidney and pancreas and at very low levels in brain and liver.</text>
</comment>
<comment type="similarity">
    <text evidence="15">Belongs to the CREC family.</text>
</comment>
<dbReference type="EMBL" id="U67280">
    <property type="protein sequence ID" value="AAB97725.1"/>
    <property type="molecule type" value="mRNA"/>
</dbReference>
<dbReference type="EMBL" id="AF013759">
    <property type="protein sequence ID" value="AAC17216.1"/>
    <property type="molecule type" value="mRNA"/>
</dbReference>
<dbReference type="EMBL" id="AF345637">
    <property type="protein sequence ID" value="AAK72908.1"/>
    <property type="molecule type" value="mRNA"/>
</dbReference>
<dbReference type="EMBL" id="HM002604">
    <property type="protein sequence ID" value="ADG45004.1"/>
    <property type="molecule type" value="mRNA"/>
</dbReference>
<dbReference type="EMBL" id="HM002605">
    <property type="protein sequence ID" value="ADG45005.1"/>
    <property type="molecule type" value="mRNA"/>
</dbReference>
<dbReference type="EMBL" id="HM002606">
    <property type="protein sequence ID" value="ADG45006.1"/>
    <property type="molecule type" value="mRNA"/>
</dbReference>
<dbReference type="EMBL" id="HM002607">
    <property type="protein sequence ID" value="ADG45007.1"/>
    <property type="molecule type" value="mRNA"/>
</dbReference>
<dbReference type="EMBL" id="HM002608">
    <property type="protein sequence ID" value="ADG45008.1"/>
    <property type="molecule type" value="mRNA"/>
</dbReference>
<dbReference type="EMBL" id="HM002609">
    <property type="protein sequence ID" value="ADG45009.1"/>
    <property type="molecule type" value="mRNA"/>
</dbReference>
<dbReference type="EMBL" id="HM002610">
    <property type="protein sequence ID" value="ADG45010.1"/>
    <property type="molecule type" value="mRNA"/>
</dbReference>
<dbReference type="EMBL" id="HM002611">
    <property type="protein sequence ID" value="ADG45011.1"/>
    <property type="molecule type" value="mRNA"/>
</dbReference>
<dbReference type="EMBL" id="HM002612">
    <property type="protein sequence ID" value="ADG45012.1"/>
    <property type="molecule type" value="mRNA"/>
</dbReference>
<dbReference type="EMBL" id="HM002613">
    <property type="protein sequence ID" value="ADG45013.1"/>
    <property type="molecule type" value="mRNA"/>
</dbReference>
<dbReference type="EMBL" id="HM002614">
    <property type="protein sequence ID" value="ADG45014.1"/>
    <property type="molecule type" value="mRNA"/>
</dbReference>
<dbReference type="EMBL" id="HM002615">
    <property type="protein sequence ID" value="ADG45015.1"/>
    <property type="molecule type" value="mRNA"/>
</dbReference>
<dbReference type="EMBL" id="HM002616">
    <property type="protein sequence ID" value="ADG45016.1"/>
    <property type="molecule type" value="mRNA"/>
</dbReference>
<dbReference type="EMBL" id="AK056338">
    <property type="protein sequence ID" value="BAG51681.1"/>
    <property type="molecule type" value="mRNA"/>
</dbReference>
<dbReference type="EMBL" id="CR541835">
    <property type="protein sequence ID" value="CAG46634.1"/>
    <property type="molecule type" value="mRNA"/>
</dbReference>
<dbReference type="EMBL" id="AC024952">
    <property type="status" value="NOT_ANNOTATED_CDS"/>
    <property type="molecule type" value="Genomic_DNA"/>
</dbReference>
<dbReference type="EMBL" id="CH471070">
    <property type="protein sequence ID" value="EAW83679.1"/>
    <property type="molecule type" value="Genomic_DNA"/>
</dbReference>
<dbReference type="EMBL" id="BC013383">
    <property type="protein sequence ID" value="AAH13383.1"/>
    <property type="molecule type" value="mRNA"/>
</dbReference>
<dbReference type="EMBL" id="AF257659">
    <property type="protein sequence ID" value="AAF76141.1"/>
    <property type="molecule type" value="mRNA"/>
</dbReference>
<dbReference type="CCDS" id="CCDS47703.1">
    <molecule id="O43852-2"/>
</dbReference>
<dbReference type="CCDS" id="CCDS56506.1">
    <molecule id="O43852-3"/>
</dbReference>
<dbReference type="CCDS" id="CCDS56507.1">
    <molecule id="O43852-4"/>
</dbReference>
<dbReference type="CCDS" id="CCDS56508.1">
    <molecule id="O43852-10"/>
</dbReference>
<dbReference type="CCDS" id="CCDS5805.1">
    <molecule id="O43852-1"/>
</dbReference>
<dbReference type="RefSeq" id="NP_001124146.1">
    <molecule id="O43852-2"/>
    <property type="nucleotide sequence ID" value="NM_001130674.3"/>
</dbReference>
<dbReference type="RefSeq" id="NP_001186600.1">
    <molecule id="O43852-3"/>
    <property type="nucleotide sequence ID" value="NM_001199671.2"/>
</dbReference>
<dbReference type="RefSeq" id="NP_001186601.1">
    <molecule id="O43852-4"/>
    <property type="nucleotide sequence ID" value="NM_001199672.2"/>
</dbReference>
<dbReference type="RefSeq" id="NP_001186602.1">
    <molecule id="O43852-10"/>
    <property type="nucleotide sequence ID" value="NM_001199673.2"/>
</dbReference>
<dbReference type="RefSeq" id="NP_001210.1">
    <molecule id="O43852-1"/>
    <property type="nucleotide sequence ID" value="NM_001219.5"/>
</dbReference>
<dbReference type="RefSeq" id="XP_016868148.1">
    <property type="nucleotide sequence ID" value="XM_017012659.1"/>
</dbReference>
<dbReference type="SASBDB" id="O43852"/>
<dbReference type="SMR" id="O43852"/>
<dbReference type="BioGRID" id="107263">
    <property type="interactions" value="359"/>
</dbReference>
<dbReference type="FunCoup" id="O43852">
    <property type="interactions" value="2712"/>
</dbReference>
<dbReference type="IntAct" id="O43852">
    <property type="interactions" value="119"/>
</dbReference>
<dbReference type="MINT" id="O43852"/>
<dbReference type="STRING" id="9606.ENSP00000438248"/>
<dbReference type="GlyConnect" id="1062">
    <property type="glycosylation" value="43 N-Linked glycans (1 site)"/>
</dbReference>
<dbReference type="GlyCosmos" id="O43852">
    <property type="glycosylation" value="2 sites, 43 glycans"/>
</dbReference>
<dbReference type="GlyGen" id="O43852">
    <property type="glycosylation" value="9 sites, 109 N-linked glycans (1 site), 3 O-linked glycans (8 sites)"/>
</dbReference>
<dbReference type="iPTMnet" id="O43852"/>
<dbReference type="MetOSite" id="O43852"/>
<dbReference type="PhosphoSitePlus" id="O43852"/>
<dbReference type="SwissPalm" id="O43852"/>
<dbReference type="BioMuta" id="CALU"/>
<dbReference type="jPOST" id="O43852"/>
<dbReference type="MassIVE" id="O43852"/>
<dbReference type="PaxDb" id="9606-ENSP00000438248"/>
<dbReference type="PeptideAtlas" id="O43852"/>
<dbReference type="ProteomicsDB" id="25733"/>
<dbReference type="ProteomicsDB" id="27707"/>
<dbReference type="ProteomicsDB" id="49203">
    <molecule id="O43852-1"/>
</dbReference>
<dbReference type="ProteomicsDB" id="49204">
    <molecule id="O43852-2"/>
</dbReference>
<dbReference type="ProteomicsDB" id="49205">
    <molecule id="O43852-3"/>
</dbReference>
<dbReference type="ProteomicsDB" id="49206">
    <molecule id="O43852-4"/>
</dbReference>
<dbReference type="Pumba" id="O43852"/>
<dbReference type="TopDownProteomics" id="O43852-1">
    <molecule id="O43852-1"/>
</dbReference>
<dbReference type="TopDownProteomics" id="O43852-2">
    <molecule id="O43852-2"/>
</dbReference>
<dbReference type="TopDownProteomics" id="O43852-3">
    <molecule id="O43852-3"/>
</dbReference>
<dbReference type="TopDownProteomics" id="O43852-4">
    <molecule id="O43852-4"/>
</dbReference>
<dbReference type="TopDownProteomics" id="O43852-5">
    <molecule id="O43852-5"/>
</dbReference>
<dbReference type="TopDownProteomics" id="O43852-6">
    <molecule id="O43852-6"/>
</dbReference>
<dbReference type="TopDownProteomics" id="O43852-8">
    <molecule id="O43852-8"/>
</dbReference>
<dbReference type="TopDownProteomics" id="O43852-9">
    <molecule id="O43852-9"/>
</dbReference>
<dbReference type="Antibodypedia" id="1219">
    <property type="antibodies" value="279 antibodies from 33 providers"/>
</dbReference>
<dbReference type="DNASU" id="813"/>
<dbReference type="Ensembl" id="ENST00000249364.9">
    <molecule id="O43852-1"/>
    <property type="protein sequence ID" value="ENSP00000249364.4"/>
    <property type="gene ID" value="ENSG00000128595.17"/>
</dbReference>
<dbReference type="Ensembl" id="ENST00000449187.7">
    <molecule id="O43852-2"/>
    <property type="protein sequence ID" value="ENSP00000408838.2"/>
    <property type="gene ID" value="ENSG00000128595.17"/>
</dbReference>
<dbReference type="Ensembl" id="ENST00000479257.5">
    <molecule id="O43852-3"/>
    <property type="protein sequence ID" value="ENSP00000420381.1"/>
    <property type="gene ID" value="ENSG00000128595.17"/>
</dbReference>
<dbReference type="Ensembl" id="ENST00000535011.6">
    <molecule id="O43852-10"/>
    <property type="protein sequence ID" value="ENSP00000442110.1"/>
    <property type="gene ID" value="ENSG00000128595.17"/>
</dbReference>
<dbReference type="Ensembl" id="ENST00000542996.7">
    <molecule id="O43852-4"/>
    <property type="protein sequence ID" value="ENSP00000438248.1"/>
    <property type="gene ID" value="ENSG00000128595.17"/>
</dbReference>
<dbReference type="GeneID" id="813"/>
<dbReference type="KEGG" id="hsa:813"/>
<dbReference type="MANE-Select" id="ENST00000249364.9">
    <property type="protein sequence ID" value="ENSP00000249364.4"/>
    <property type="RefSeq nucleotide sequence ID" value="NM_001219.5"/>
    <property type="RefSeq protein sequence ID" value="NP_001210.1"/>
</dbReference>
<dbReference type="UCSC" id="uc003vnr.4">
    <molecule id="O43852-1"/>
    <property type="organism name" value="human"/>
</dbReference>
<dbReference type="AGR" id="HGNC:1458"/>
<dbReference type="CTD" id="813"/>
<dbReference type="DisGeNET" id="813"/>
<dbReference type="GeneCards" id="CALU"/>
<dbReference type="HGNC" id="HGNC:1458">
    <property type="gene designation" value="CALU"/>
</dbReference>
<dbReference type="HPA" id="ENSG00000128595">
    <property type="expression patterns" value="Low tissue specificity"/>
</dbReference>
<dbReference type="MIM" id="603420">
    <property type="type" value="gene"/>
</dbReference>
<dbReference type="neXtProt" id="NX_O43852"/>
<dbReference type="OpenTargets" id="ENSG00000128595"/>
<dbReference type="PharmGKB" id="PA26047"/>
<dbReference type="VEuPathDB" id="HostDB:ENSG00000128595"/>
<dbReference type="eggNOG" id="KOG4223">
    <property type="taxonomic scope" value="Eukaryota"/>
</dbReference>
<dbReference type="GeneTree" id="ENSGT01010000222360"/>
<dbReference type="HOGENOM" id="CLU_044718_0_1_1"/>
<dbReference type="InParanoid" id="O43852"/>
<dbReference type="OrthoDB" id="293868at2759"/>
<dbReference type="PAN-GO" id="O43852">
    <property type="GO annotations" value="2 GO annotations based on evolutionary models"/>
</dbReference>
<dbReference type="PhylomeDB" id="O43852"/>
<dbReference type="TreeFam" id="TF314849"/>
<dbReference type="PathwayCommons" id="O43852"/>
<dbReference type="Reactome" id="R-HSA-114608">
    <property type="pathway name" value="Platelet degranulation"/>
</dbReference>
<dbReference type="Reactome" id="R-HSA-381426">
    <property type="pathway name" value="Regulation of Insulin-like Growth Factor (IGF) transport and uptake by Insulin-like Growth Factor Binding Proteins (IGFBPs)"/>
</dbReference>
<dbReference type="Reactome" id="R-HSA-8957275">
    <property type="pathway name" value="Post-translational protein phosphorylation"/>
</dbReference>
<dbReference type="SignaLink" id="O43852"/>
<dbReference type="SIGNOR" id="O43852"/>
<dbReference type="BioGRID-ORCS" id="813">
    <property type="hits" value="13 hits in 1159 CRISPR screens"/>
</dbReference>
<dbReference type="ChiTaRS" id="CALU">
    <property type="organism name" value="human"/>
</dbReference>
<dbReference type="GeneWiki" id="CALU_(gene)"/>
<dbReference type="GenomeRNAi" id="813"/>
<dbReference type="Pharos" id="O43852">
    <property type="development level" value="Tbio"/>
</dbReference>
<dbReference type="PRO" id="PR:O43852"/>
<dbReference type="Proteomes" id="UP000005640">
    <property type="component" value="Chromosome 7"/>
</dbReference>
<dbReference type="RNAct" id="O43852">
    <property type="molecule type" value="protein"/>
</dbReference>
<dbReference type="Bgee" id="ENSG00000128595">
    <property type="expression patterns" value="Expressed in stromal cell of endometrium and 218 other cell types or tissues"/>
</dbReference>
<dbReference type="ExpressionAtlas" id="O43852">
    <property type="expression patterns" value="baseline and differential"/>
</dbReference>
<dbReference type="GO" id="GO:0005783">
    <property type="term" value="C:endoplasmic reticulum"/>
    <property type="evidence" value="ECO:0000314"/>
    <property type="project" value="HPA"/>
</dbReference>
<dbReference type="GO" id="GO:0005788">
    <property type="term" value="C:endoplasmic reticulum lumen"/>
    <property type="evidence" value="ECO:0000304"/>
    <property type="project" value="Reactome"/>
</dbReference>
<dbReference type="GO" id="GO:0005789">
    <property type="term" value="C:endoplasmic reticulum membrane"/>
    <property type="evidence" value="ECO:0000314"/>
    <property type="project" value="UniProtKB"/>
</dbReference>
<dbReference type="GO" id="GO:0005576">
    <property type="term" value="C:extracellular region"/>
    <property type="evidence" value="ECO:0000314"/>
    <property type="project" value="UniProtKB"/>
</dbReference>
<dbReference type="GO" id="GO:0005794">
    <property type="term" value="C:Golgi apparatus"/>
    <property type="evidence" value="ECO:0000314"/>
    <property type="project" value="UniProtKB"/>
</dbReference>
<dbReference type="GO" id="GO:0042470">
    <property type="term" value="C:melanosome"/>
    <property type="evidence" value="ECO:0007669"/>
    <property type="project" value="UniProtKB-SubCell"/>
</dbReference>
<dbReference type="GO" id="GO:0016020">
    <property type="term" value="C:membrane"/>
    <property type="evidence" value="ECO:0007005"/>
    <property type="project" value="UniProtKB"/>
</dbReference>
<dbReference type="GO" id="GO:0033018">
    <property type="term" value="C:sarcoplasmic reticulum lumen"/>
    <property type="evidence" value="ECO:0007669"/>
    <property type="project" value="UniProtKB-SubCell"/>
</dbReference>
<dbReference type="GO" id="GO:0005509">
    <property type="term" value="F:calcium ion binding"/>
    <property type="evidence" value="ECO:0000314"/>
    <property type="project" value="UniProtKB"/>
</dbReference>
<dbReference type="CDD" id="cd16228">
    <property type="entry name" value="EFh_CREC_Calumenin"/>
    <property type="match status" value="1"/>
</dbReference>
<dbReference type="FunFam" id="1.10.238.10:FF:000090">
    <property type="entry name" value="calumenin isoform X2"/>
    <property type="match status" value="1"/>
</dbReference>
<dbReference type="FunFam" id="1.10.238.10:FF:000109">
    <property type="entry name" value="calumenin isoform X2"/>
    <property type="match status" value="1"/>
</dbReference>
<dbReference type="FunFam" id="1.10.238.10:FF:000110">
    <property type="entry name" value="calumenin isoform X2"/>
    <property type="match status" value="1"/>
</dbReference>
<dbReference type="Gene3D" id="1.10.238.10">
    <property type="entry name" value="EF-hand"/>
    <property type="match status" value="2"/>
</dbReference>
<dbReference type="InterPro" id="IPR011992">
    <property type="entry name" value="EF-hand-dom_pair"/>
</dbReference>
<dbReference type="InterPro" id="IPR018247">
    <property type="entry name" value="EF_Hand_1_Ca_BS"/>
</dbReference>
<dbReference type="InterPro" id="IPR002048">
    <property type="entry name" value="EF_hand_dom"/>
</dbReference>
<dbReference type="PANTHER" id="PTHR10827:SF76">
    <property type="entry name" value="CALUMENIN"/>
    <property type="match status" value="1"/>
</dbReference>
<dbReference type="PANTHER" id="PTHR10827">
    <property type="entry name" value="RETICULOCALBIN"/>
    <property type="match status" value="1"/>
</dbReference>
<dbReference type="Pfam" id="PF13202">
    <property type="entry name" value="EF-hand_5"/>
    <property type="match status" value="3"/>
</dbReference>
<dbReference type="SMART" id="SM00054">
    <property type="entry name" value="EFh"/>
    <property type="match status" value="4"/>
</dbReference>
<dbReference type="SUPFAM" id="SSF47473">
    <property type="entry name" value="EF-hand"/>
    <property type="match status" value="2"/>
</dbReference>
<dbReference type="PROSITE" id="PS00018">
    <property type="entry name" value="EF_HAND_1"/>
    <property type="match status" value="4"/>
</dbReference>
<dbReference type="PROSITE" id="PS50222">
    <property type="entry name" value="EF_HAND_2"/>
    <property type="match status" value="6"/>
</dbReference>
<reference key="1">
    <citation type="journal article" date="1998" name="Biochim. Biophys. Acta">
        <title>Molecular cloning of a cDNA encoding human calumenin, expression in Escherichia coli and analysis of its Ca2+-binding activity.</title>
        <authorList>
            <person name="Vorum H."/>
            <person name="Liu X."/>
            <person name="Madsen P."/>
            <person name="Rasmussen H.H."/>
            <person name="Honore B."/>
        </authorList>
    </citation>
    <scope>NUCLEOTIDE SEQUENCE [MRNA] (ISOFORM 1)</scope>
    <scope>PARTIAL PROTEIN SEQUENCE</scope>
    <scope>CALCIUM-BINDING</scope>
    <source>
        <tissue>Keratinocyte</tissue>
    </source>
</reference>
<reference key="2">
    <citation type="journal article" date="1998" name="Genomics">
        <title>Human calumenin gene (CALU): cDNA isolation and chromosomal mapping to 7q32.</title>
        <authorList>
            <person name="Yabe D."/>
            <person name="Taniwaki M."/>
            <person name="Nakamura T."/>
            <person name="Kanazawa N."/>
            <person name="Tashiro K."/>
            <person name="Honjo T."/>
        </authorList>
    </citation>
    <scope>NUCLEOTIDE SEQUENCE [MRNA] (ISOFORM 1)</scope>
</reference>
<reference key="3">
    <citation type="submission" date="2001-02" db="EMBL/GenBank/DDBJ databases">
        <title>Novel splice variant of human calumenin.</title>
        <authorList>
            <person name="Peterson R.E. Jr."/>
            <person name="Watson D.K."/>
        </authorList>
    </citation>
    <scope>NUCLEOTIDE SEQUENCE [MRNA] (ISOFORM 2)</scope>
</reference>
<reference key="4">
    <citation type="submission" date="2010-03" db="EMBL/GenBank/DDBJ databases">
        <title>Calumenin isoforms and their intracellular and extracellular function.</title>
        <authorList>
            <person name="Wang Q."/>
            <person name="Chen L."/>
            <person name="Shen B.R."/>
            <person name="Feng H."/>
            <person name="Zheng P.L."/>
            <person name="Teng J.L."/>
            <person name="Chen J.G."/>
        </authorList>
    </citation>
    <scope>NUCLEOTIDE SEQUENCE [MRNA] (ISOFORMS 3; 4; 5; 6; 7; 8; 9; 10; 11; 12; 13; 14 AND 15)</scope>
    <scope>VARIANT GLN-4</scope>
</reference>
<reference key="5">
    <citation type="journal article" date="2004" name="Nat. Genet.">
        <title>Complete sequencing and characterization of 21,243 full-length human cDNAs.</title>
        <authorList>
            <person name="Ota T."/>
            <person name="Suzuki Y."/>
            <person name="Nishikawa T."/>
            <person name="Otsuki T."/>
            <person name="Sugiyama T."/>
            <person name="Irie R."/>
            <person name="Wakamatsu A."/>
            <person name="Hayashi K."/>
            <person name="Sato H."/>
            <person name="Nagai K."/>
            <person name="Kimura K."/>
            <person name="Makita H."/>
            <person name="Sekine M."/>
            <person name="Obayashi M."/>
            <person name="Nishi T."/>
            <person name="Shibahara T."/>
            <person name="Tanaka T."/>
            <person name="Ishii S."/>
            <person name="Yamamoto J."/>
            <person name="Saito K."/>
            <person name="Kawai Y."/>
            <person name="Isono Y."/>
            <person name="Nakamura Y."/>
            <person name="Nagahari K."/>
            <person name="Murakami K."/>
            <person name="Yasuda T."/>
            <person name="Iwayanagi T."/>
            <person name="Wagatsuma M."/>
            <person name="Shiratori A."/>
            <person name="Sudo H."/>
            <person name="Hosoiri T."/>
            <person name="Kaku Y."/>
            <person name="Kodaira H."/>
            <person name="Kondo H."/>
            <person name="Sugawara M."/>
            <person name="Takahashi M."/>
            <person name="Kanda K."/>
            <person name="Yokoi T."/>
            <person name="Furuya T."/>
            <person name="Kikkawa E."/>
            <person name="Omura Y."/>
            <person name="Abe K."/>
            <person name="Kamihara K."/>
            <person name="Katsuta N."/>
            <person name="Sato K."/>
            <person name="Tanikawa M."/>
            <person name="Yamazaki M."/>
            <person name="Ninomiya K."/>
            <person name="Ishibashi T."/>
            <person name="Yamashita H."/>
            <person name="Murakawa K."/>
            <person name="Fujimori K."/>
            <person name="Tanai H."/>
            <person name="Kimata M."/>
            <person name="Watanabe M."/>
            <person name="Hiraoka S."/>
            <person name="Chiba Y."/>
            <person name="Ishida S."/>
            <person name="Ono Y."/>
            <person name="Takiguchi S."/>
            <person name="Watanabe S."/>
            <person name="Yosida M."/>
            <person name="Hotuta T."/>
            <person name="Kusano J."/>
            <person name="Kanehori K."/>
            <person name="Takahashi-Fujii A."/>
            <person name="Hara H."/>
            <person name="Tanase T.-O."/>
            <person name="Nomura Y."/>
            <person name="Togiya S."/>
            <person name="Komai F."/>
            <person name="Hara R."/>
            <person name="Takeuchi K."/>
            <person name="Arita M."/>
            <person name="Imose N."/>
            <person name="Musashino K."/>
            <person name="Yuuki H."/>
            <person name="Oshima A."/>
            <person name="Sasaki N."/>
            <person name="Aotsuka S."/>
            <person name="Yoshikawa Y."/>
            <person name="Matsunawa H."/>
            <person name="Ichihara T."/>
            <person name="Shiohata N."/>
            <person name="Sano S."/>
            <person name="Moriya S."/>
            <person name="Momiyama H."/>
            <person name="Satoh N."/>
            <person name="Takami S."/>
            <person name="Terashima Y."/>
            <person name="Suzuki O."/>
            <person name="Nakagawa S."/>
            <person name="Senoh A."/>
            <person name="Mizoguchi H."/>
            <person name="Goto Y."/>
            <person name="Shimizu F."/>
            <person name="Wakebe H."/>
            <person name="Hishigaki H."/>
            <person name="Watanabe T."/>
            <person name="Sugiyama A."/>
            <person name="Takemoto M."/>
            <person name="Kawakami B."/>
            <person name="Yamazaki M."/>
            <person name="Watanabe K."/>
            <person name="Kumagai A."/>
            <person name="Itakura S."/>
            <person name="Fukuzumi Y."/>
            <person name="Fujimori Y."/>
            <person name="Komiyama M."/>
            <person name="Tashiro H."/>
            <person name="Tanigami A."/>
            <person name="Fujiwara T."/>
            <person name="Ono T."/>
            <person name="Yamada K."/>
            <person name="Fujii Y."/>
            <person name="Ozaki K."/>
            <person name="Hirao M."/>
            <person name="Ohmori Y."/>
            <person name="Kawabata A."/>
            <person name="Hikiji T."/>
            <person name="Kobatake N."/>
            <person name="Inagaki H."/>
            <person name="Ikema Y."/>
            <person name="Okamoto S."/>
            <person name="Okitani R."/>
            <person name="Kawakami T."/>
            <person name="Noguchi S."/>
            <person name="Itoh T."/>
            <person name="Shigeta K."/>
            <person name="Senba T."/>
            <person name="Matsumura K."/>
            <person name="Nakajima Y."/>
            <person name="Mizuno T."/>
            <person name="Morinaga M."/>
            <person name="Sasaki M."/>
            <person name="Togashi T."/>
            <person name="Oyama M."/>
            <person name="Hata H."/>
            <person name="Watanabe M."/>
            <person name="Komatsu T."/>
            <person name="Mizushima-Sugano J."/>
            <person name="Satoh T."/>
            <person name="Shirai Y."/>
            <person name="Takahashi Y."/>
            <person name="Nakagawa K."/>
            <person name="Okumura K."/>
            <person name="Nagase T."/>
            <person name="Nomura N."/>
            <person name="Kikuchi H."/>
            <person name="Masuho Y."/>
            <person name="Yamashita R."/>
            <person name="Nakai K."/>
            <person name="Yada T."/>
            <person name="Nakamura Y."/>
            <person name="Ohara O."/>
            <person name="Isogai T."/>
            <person name="Sugano S."/>
        </authorList>
    </citation>
    <scope>NUCLEOTIDE SEQUENCE [LARGE SCALE MRNA] (ISOFORM 3)</scope>
</reference>
<reference key="6">
    <citation type="submission" date="2004-06" db="EMBL/GenBank/DDBJ databases">
        <title>Cloning of human full open reading frames in Gateway(TM) system entry vector (pDONR201).</title>
        <authorList>
            <person name="Ebert L."/>
            <person name="Schick M."/>
            <person name="Neubert P."/>
            <person name="Schatten R."/>
            <person name="Henze S."/>
            <person name="Korn B."/>
        </authorList>
    </citation>
    <scope>NUCLEOTIDE SEQUENCE [LARGE SCALE MRNA] (ISOFORM 1)</scope>
</reference>
<reference key="7">
    <citation type="journal article" date="2003" name="Nature">
        <title>The DNA sequence of human chromosome 7.</title>
        <authorList>
            <person name="Hillier L.W."/>
            <person name="Fulton R.S."/>
            <person name="Fulton L.A."/>
            <person name="Graves T.A."/>
            <person name="Pepin K.H."/>
            <person name="Wagner-McPherson C."/>
            <person name="Layman D."/>
            <person name="Maas J."/>
            <person name="Jaeger S."/>
            <person name="Walker R."/>
            <person name="Wylie K."/>
            <person name="Sekhon M."/>
            <person name="Becker M.C."/>
            <person name="O'Laughlin M.D."/>
            <person name="Schaller M.E."/>
            <person name="Fewell G.A."/>
            <person name="Delehaunty K.D."/>
            <person name="Miner T.L."/>
            <person name="Nash W.E."/>
            <person name="Cordes M."/>
            <person name="Du H."/>
            <person name="Sun H."/>
            <person name="Edwards J."/>
            <person name="Bradshaw-Cordum H."/>
            <person name="Ali J."/>
            <person name="Andrews S."/>
            <person name="Isak A."/>
            <person name="Vanbrunt A."/>
            <person name="Nguyen C."/>
            <person name="Du F."/>
            <person name="Lamar B."/>
            <person name="Courtney L."/>
            <person name="Kalicki J."/>
            <person name="Ozersky P."/>
            <person name="Bielicki L."/>
            <person name="Scott K."/>
            <person name="Holmes A."/>
            <person name="Harkins R."/>
            <person name="Harris A."/>
            <person name="Strong C.M."/>
            <person name="Hou S."/>
            <person name="Tomlinson C."/>
            <person name="Dauphin-Kohlberg S."/>
            <person name="Kozlowicz-Reilly A."/>
            <person name="Leonard S."/>
            <person name="Rohlfing T."/>
            <person name="Rock S.M."/>
            <person name="Tin-Wollam A.-M."/>
            <person name="Abbott A."/>
            <person name="Minx P."/>
            <person name="Maupin R."/>
            <person name="Strowmatt C."/>
            <person name="Latreille P."/>
            <person name="Miller N."/>
            <person name="Johnson D."/>
            <person name="Murray J."/>
            <person name="Woessner J.P."/>
            <person name="Wendl M.C."/>
            <person name="Yang S.-P."/>
            <person name="Schultz B.R."/>
            <person name="Wallis J.W."/>
            <person name="Spieth J."/>
            <person name="Bieri T.A."/>
            <person name="Nelson J.O."/>
            <person name="Berkowicz N."/>
            <person name="Wohldmann P.E."/>
            <person name="Cook L.L."/>
            <person name="Hickenbotham M.T."/>
            <person name="Eldred J."/>
            <person name="Williams D."/>
            <person name="Bedell J.A."/>
            <person name="Mardis E.R."/>
            <person name="Clifton S.W."/>
            <person name="Chissoe S.L."/>
            <person name="Marra M.A."/>
            <person name="Raymond C."/>
            <person name="Haugen E."/>
            <person name="Gillett W."/>
            <person name="Zhou Y."/>
            <person name="James R."/>
            <person name="Phelps K."/>
            <person name="Iadanoto S."/>
            <person name="Bubb K."/>
            <person name="Simms E."/>
            <person name="Levy R."/>
            <person name="Clendenning J."/>
            <person name="Kaul R."/>
            <person name="Kent W.J."/>
            <person name="Furey T.S."/>
            <person name="Baertsch R.A."/>
            <person name="Brent M.R."/>
            <person name="Keibler E."/>
            <person name="Flicek P."/>
            <person name="Bork P."/>
            <person name="Suyama M."/>
            <person name="Bailey J.A."/>
            <person name="Portnoy M.E."/>
            <person name="Torrents D."/>
            <person name="Chinwalla A.T."/>
            <person name="Gish W.R."/>
            <person name="Eddy S.R."/>
            <person name="McPherson J.D."/>
            <person name="Olson M.V."/>
            <person name="Eichler E.E."/>
            <person name="Green E.D."/>
            <person name="Waterston R.H."/>
            <person name="Wilson R.K."/>
        </authorList>
    </citation>
    <scope>NUCLEOTIDE SEQUENCE [LARGE SCALE GENOMIC DNA]</scope>
</reference>
<reference key="8">
    <citation type="submission" date="2005-07" db="EMBL/GenBank/DDBJ databases">
        <authorList>
            <person name="Mural R.J."/>
            <person name="Istrail S."/>
            <person name="Sutton G."/>
            <person name="Florea L."/>
            <person name="Halpern A.L."/>
            <person name="Mobarry C.M."/>
            <person name="Lippert R."/>
            <person name="Walenz B."/>
            <person name="Shatkay H."/>
            <person name="Dew I."/>
            <person name="Miller J.R."/>
            <person name="Flanigan M.J."/>
            <person name="Edwards N.J."/>
            <person name="Bolanos R."/>
            <person name="Fasulo D."/>
            <person name="Halldorsson B.V."/>
            <person name="Hannenhalli S."/>
            <person name="Turner R."/>
            <person name="Yooseph S."/>
            <person name="Lu F."/>
            <person name="Nusskern D.R."/>
            <person name="Shue B.C."/>
            <person name="Zheng X.H."/>
            <person name="Zhong F."/>
            <person name="Delcher A.L."/>
            <person name="Huson D.H."/>
            <person name="Kravitz S.A."/>
            <person name="Mouchard L."/>
            <person name="Reinert K."/>
            <person name="Remington K.A."/>
            <person name="Clark A.G."/>
            <person name="Waterman M.S."/>
            <person name="Eichler E.E."/>
            <person name="Adams M.D."/>
            <person name="Hunkapiller M.W."/>
            <person name="Myers E.W."/>
            <person name="Venter J.C."/>
        </authorList>
    </citation>
    <scope>NUCLEOTIDE SEQUENCE [LARGE SCALE GENOMIC DNA]</scope>
</reference>
<reference key="9">
    <citation type="journal article" date="2004" name="Genome Res.">
        <title>The status, quality, and expansion of the NIH full-length cDNA project: the Mammalian Gene Collection (MGC).</title>
        <authorList>
            <consortium name="The MGC Project Team"/>
        </authorList>
    </citation>
    <scope>NUCLEOTIDE SEQUENCE [LARGE SCALE MRNA] (ISOFORM 1)</scope>
    <source>
        <tissue>Brain</tissue>
    </source>
</reference>
<reference key="10">
    <citation type="submission" date="2000-04" db="EMBL/GenBank/DDBJ databases">
        <authorList>
            <person name="Hseu M.-J."/>
            <person name="Tzeng M.-C."/>
        </authorList>
    </citation>
    <scope>NUCLEOTIDE SEQUENCE [MRNA] OF 20-315 (ISOFORM 2)</scope>
    <source>
        <tissue>Brain</tissue>
    </source>
</reference>
<reference key="11">
    <citation type="journal article" date="2003" name="Nat. Biotechnol.">
        <title>Exploring proteomes and analyzing protein processing by mass spectrometric identification of sorted N-terminal peptides.</title>
        <authorList>
            <person name="Gevaert K."/>
            <person name="Goethals M."/>
            <person name="Martens L."/>
            <person name="Van Damme J."/>
            <person name="Staes A."/>
            <person name="Thomas G.R."/>
            <person name="Vandekerckhove J."/>
        </authorList>
    </citation>
    <scope>PROTEIN SEQUENCE OF 20-27</scope>
    <source>
        <tissue>Platelet</tissue>
    </source>
</reference>
<reference key="12">
    <citation type="journal article" date="1999" name="Exp. Cell Res.">
        <title>Human calumenin localizes to the secretory pathway and is secreted to the medium.</title>
        <authorList>
            <person name="Vorum H."/>
            <person name="Hager H."/>
            <person name="Christensen B.M."/>
            <person name="Nielsen S."/>
            <person name="Honore B."/>
        </authorList>
    </citation>
    <scope>SUBCELLULAR LOCATION</scope>
</reference>
<reference key="13">
    <citation type="journal article" date="2003" name="J. Proteome Res.">
        <title>Proteomic analysis of early melanosomes: identification of novel melanosomal proteins.</title>
        <authorList>
            <person name="Basrur V."/>
            <person name="Yang F."/>
            <person name="Kushimoto T."/>
            <person name="Higashimoto Y."/>
            <person name="Yasumoto K."/>
            <person name="Valencia J."/>
            <person name="Muller J."/>
            <person name="Vieira W.D."/>
            <person name="Watabe H."/>
            <person name="Shabanowitz J."/>
            <person name="Hearing V.J."/>
            <person name="Hunt D.F."/>
            <person name="Appella E."/>
        </authorList>
    </citation>
    <scope>SUBCELLULAR LOCATION [LARGE SCALE ANALYSIS]</scope>
    <source>
        <tissue>Melanoma</tissue>
    </source>
</reference>
<reference key="14">
    <citation type="journal article" date="2006" name="J. Proteome Res.">
        <title>Proteomic and bioinformatic characterization of the biogenesis and function of melanosomes.</title>
        <authorList>
            <person name="Chi A."/>
            <person name="Valencia J.C."/>
            <person name="Hu Z.-Z."/>
            <person name="Watabe H."/>
            <person name="Yamaguchi H."/>
            <person name="Mangini N.J."/>
            <person name="Huang H."/>
            <person name="Canfield V.A."/>
            <person name="Cheng K.C."/>
            <person name="Yang F."/>
            <person name="Abe R."/>
            <person name="Yamagishi S."/>
            <person name="Shabanowitz J."/>
            <person name="Hearing V.J."/>
            <person name="Wu C."/>
            <person name="Appella E."/>
            <person name="Hunt D.F."/>
        </authorList>
    </citation>
    <scope>SUBCELLULAR LOCATION [LARGE SCALE ANALYSIS]</scope>
    <source>
        <tissue>Melanoma</tissue>
    </source>
</reference>
<reference key="15">
    <citation type="journal article" date="2006" name="Nat. Biotechnol.">
        <title>A probability-based approach for high-throughput protein phosphorylation analysis and site localization.</title>
        <authorList>
            <person name="Beausoleil S.A."/>
            <person name="Villen J."/>
            <person name="Gerber S.A."/>
            <person name="Rush J."/>
            <person name="Gygi S.P."/>
        </authorList>
    </citation>
    <scope>PHOSPHORYLATION [LARGE SCALE ANALYSIS] AT THR-65</scope>
    <scope>IDENTIFICATION BY MASS SPECTROMETRY [LARGE SCALE ANALYSIS]</scope>
    <source>
        <tissue>Cervix carcinoma</tissue>
    </source>
</reference>
<reference key="16">
    <citation type="journal article" date="2008" name="Mol. Cell">
        <title>Kinase-selective enrichment enables quantitative phosphoproteomics of the kinome across the cell cycle.</title>
        <authorList>
            <person name="Daub H."/>
            <person name="Olsen J.V."/>
            <person name="Bairlein M."/>
            <person name="Gnad F."/>
            <person name="Oppermann F.S."/>
            <person name="Korner R."/>
            <person name="Greff Z."/>
            <person name="Keri G."/>
            <person name="Stemmann O."/>
            <person name="Mann M."/>
        </authorList>
    </citation>
    <scope>PHOSPHORYLATION [LARGE SCALE ANALYSIS] AT SER-44 AND THR-65</scope>
    <scope>IDENTIFICATION BY MASS SPECTROMETRY [LARGE SCALE ANALYSIS]</scope>
    <source>
        <tissue>Cervix carcinoma</tissue>
    </source>
</reference>
<reference key="17">
    <citation type="journal article" date="2009" name="J. Proteome Res.">
        <title>Glycoproteomics analysis of human liver tissue by combination of multiple enzyme digestion and hydrazide chemistry.</title>
        <authorList>
            <person name="Chen R."/>
            <person name="Jiang X."/>
            <person name="Sun D."/>
            <person name="Han G."/>
            <person name="Wang F."/>
            <person name="Ye M."/>
            <person name="Wang L."/>
            <person name="Zou H."/>
        </authorList>
    </citation>
    <scope>GLYCOSYLATION [LARGE SCALE ANALYSIS] AT ASN-131</scope>
    <source>
        <tissue>Liver</tissue>
    </source>
</reference>
<reference key="18">
    <citation type="journal article" date="2009" name="Mol. Cell. Proteomics">
        <title>A strategy for precise and large scale identification of core fucosylated glycoproteins.</title>
        <authorList>
            <person name="Jia W."/>
            <person name="Lu Z."/>
            <person name="Fu Y."/>
            <person name="Wang H.P."/>
            <person name="Wang L.H."/>
            <person name="Chi H."/>
            <person name="Yuan Z.F."/>
            <person name="Zheng Z.B."/>
            <person name="Song L.N."/>
            <person name="Han H.H."/>
            <person name="Liang Y.M."/>
            <person name="Wang J.L."/>
            <person name="Cai Y."/>
            <person name="Zhang Y.K."/>
            <person name="Deng Y.L."/>
            <person name="Ying W.T."/>
            <person name="He S.M."/>
            <person name="Qian X.H."/>
        </authorList>
    </citation>
    <scope>GLYCOSYLATION AT ASN-131</scope>
</reference>
<reference key="19">
    <citation type="journal article" date="2010" name="Sci. Signal.">
        <title>Quantitative phosphoproteomics reveals widespread full phosphorylation site occupancy during mitosis.</title>
        <authorList>
            <person name="Olsen J.V."/>
            <person name="Vermeulen M."/>
            <person name="Santamaria A."/>
            <person name="Kumar C."/>
            <person name="Miller M.L."/>
            <person name="Jensen L.J."/>
            <person name="Gnad F."/>
            <person name="Cox J."/>
            <person name="Jensen T.S."/>
            <person name="Nigg E.A."/>
            <person name="Brunak S."/>
            <person name="Mann M."/>
        </authorList>
    </citation>
    <scope>PHOSPHORYLATION [LARGE SCALE ANALYSIS] AT SER-44 AND THR-65</scope>
    <scope>IDENTIFICATION BY MASS SPECTROMETRY [LARGE SCALE ANALYSIS]</scope>
    <source>
        <tissue>Cervix carcinoma</tissue>
    </source>
</reference>
<reference key="20">
    <citation type="journal article" date="2011" name="BMC Syst. Biol.">
        <title>Initial characterization of the human central proteome.</title>
        <authorList>
            <person name="Burkard T.R."/>
            <person name="Planyavsky M."/>
            <person name="Kaupe I."/>
            <person name="Breitwieser F.P."/>
            <person name="Buerckstuemmer T."/>
            <person name="Bennett K.L."/>
            <person name="Superti-Furga G."/>
            <person name="Colinge J."/>
        </authorList>
    </citation>
    <scope>IDENTIFICATION BY MASS SPECTROMETRY [LARGE SCALE ANALYSIS]</scope>
</reference>
<reference key="21">
    <citation type="journal article" date="2013" name="J. Proteome Res.">
        <title>Toward a comprehensive characterization of a human cancer cell phosphoproteome.</title>
        <authorList>
            <person name="Zhou H."/>
            <person name="Di Palma S."/>
            <person name="Preisinger C."/>
            <person name="Peng M."/>
            <person name="Polat A.N."/>
            <person name="Heck A.J."/>
            <person name="Mohammed S."/>
        </authorList>
    </citation>
    <scope>PHOSPHORYLATION [LARGE SCALE ANALYSIS] AT SER-44; TYR-47; THR-254; SER-261 AND SER-277</scope>
    <scope>IDENTIFICATION BY MASS SPECTROMETRY [LARGE SCALE ANALYSIS]</scope>
    <source>
        <tissue>Cervix carcinoma</tissue>
        <tissue>Erythroleukemia</tissue>
    </source>
</reference>
<reference key="22">
    <citation type="journal article" date="2014" name="J. Proteomics">
        <title>An enzyme assisted RP-RPLC approach for in-depth analysis of human liver phosphoproteome.</title>
        <authorList>
            <person name="Bian Y."/>
            <person name="Song C."/>
            <person name="Cheng K."/>
            <person name="Dong M."/>
            <person name="Wang F."/>
            <person name="Huang J."/>
            <person name="Sun D."/>
            <person name="Wang L."/>
            <person name="Ye M."/>
            <person name="Zou H."/>
        </authorList>
    </citation>
    <scope>PHOSPHORYLATION [LARGE SCALE ANALYSIS] AT THR-65</scope>
    <scope>IDENTIFICATION BY MASS SPECTROMETRY [LARGE SCALE ANALYSIS]</scope>
    <source>
        <tissue>Liver</tissue>
    </source>
</reference>
<reference key="23">
    <citation type="journal article" date="2015" name="Cell">
        <title>A single kinase generates the majority of the secreted phosphoproteome.</title>
        <authorList>
            <person name="Tagliabracci V.S."/>
            <person name="Wiley S.E."/>
            <person name="Guo X."/>
            <person name="Kinch L.N."/>
            <person name="Durrant E."/>
            <person name="Wen J."/>
            <person name="Xiao J."/>
            <person name="Cui J."/>
            <person name="Nguyen K.B."/>
            <person name="Engel J.L."/>
            <person name="Coon J.J."/>
            <person name="Grishin N."/>
            <person name="Pinna L.A."/>
            <person name="Pagliarini D.J."/>
            <person name="Dixon J.E."/>
        </authorList>
    </citation>
    <scope>PHOSPHORYLATION AT SER-69</scope>
</reference>
<reference key="24">
    <citation type="journal article" date="2015" name="Proteomics">
        <title>N-terminome analysis of the human mitochondrial proteome.</title>
        <authorList>
            <person name="Vaca Jacome A.S."/>
            <person name="Rabilloud T."/>
            <person name="Schaeffer-Reiss C."/>
            <person name="Rompais M."/>
            <person name="Ayoub D."/>
            <person name="Lane L."/>
            <person name="Bairoch A."/>
            <person name="Van Dorsselaer A."/>
            <person name="Carapito C."/>
        </authorList>
    </citation>
    <scope>IDENTIFICATION BY MASS SPECTROMETRY [LARGE SCALE ANALYSIS]</scope>
</reference>
<gene>
    <name type="primary">CALU</name>
</gene>